<protein>
    <recommendedName>
        <fullName>Phosphoenolpyruvate carboxylase</fullName>
        <shortName>PEPC</shortName>
        <shortName>PEPCase</shortName>
        <ecNumber>4.1.1.31</ecNumber>
    </recommendedName>
</protein>
<gene>
    <name type="primary">PPC</name>
</gene>
<evidence type="ECO:0000250" key="1"/>
<evidence type="ECO:0000250" key="2">
    <source>
        <dbReference type="UniProtKB" id="P00864"/>
    </source>
</evidence>
<evidence type="ECO:0000250" key="3">
    <source>
        <dbReference type="UniProtKB" id="Q9MAH0"/>
    </source>
</evidence>
<evidence type="ECO:0000269" key="4">
    <source>
    </source>
</evidence>
<evidence type="ECO:0000305" key="5"/>
<comment type="function">
    <text evidence="3">Through the carboxylation of phosphoenolpyruvate (PEP) it forms oxaloacetate, a four-carbon dicarboxylic acid source for the tricarboxylic acid cycle.</text>
</comment>
<comment type="catalytic activity">
    <reaction>
        <text>oxaloacetate + phosphate = phosphoenolpyruvate + hydrogencarbonate</text>
        <dbReference type="Rhea" id="RHEA:28370"/>
        <dbReference type="ChEBI" id="CHEBI:16452"/>
        <dbReference type="ChEBI" id="CHEBI:17544"/>
        <dbReference type="ChEBI" id="CHEBI:43474"/>
        <dbReference type="ChEBI" id="CHEBI:58702"/>
        <dbReference type="EC" id="4.1.1.31"/>
    </reaction>
</comment>
<comment type="cofactor">
    <cofactor evidence="3">
        <name>Mg(2+)</name>
        <dbReference type="ChEBI" id="CHEBI:18420"/>
    </cofactor>
</comment>
<comment type="activity regulation">
    <text evidence="1">By light-reversible phosphorylation.</text>
</comment>
<comment type="pathway">
    <text>Photosynthesis; C4 acid pathway.</text>
</comment>
<comment type="subunit">
    <text evidence="3">Homotetramer.</text>
</comment>
<comment type="subcellular location">
    <subcellularLocation>
        <location evidence="5">Cytoplasm</location>
    </subcellularLocation>
</comment>
<comment type="miscellaneous">
    <text evidence="4">Tobacco, a typical C3 plant, shows characteristics of C4 photosynthesis in cells of stems and petioles that surround the xylem and phloem.</text>
</comment>
<comment type="similarity">
    <text evidence="5">Belongs to the PEPCase type 1 family.</text>
</comment>
<name>CAPP_TOBAC</name>
<accession>P27154</accession>
<keyword id="KW-0021">Allosteric enzyme</keyword>
<keyword id="KW-0120">Carbon dioxide fixation</keyword>
<keyword id="KW-0963">Cytoplasm</keyword>
<keyword id="KW-0456">Lyase</keyword>
<keyword id="KW-0460">Magnesium</keyword>
<keyword id="KW-0597">Phosphoprotein</keyword>
<keyword id="KW-0602">Photosynthesis</keyword>
<keyword id="KW-1185">Reference proteome</keyword>
<feature type="chain" id="PRO_0000166682" description="Phosphoenolpyruvate carboxylase">
    <location>
        <begin position="1"/>
        <end position="964"/>
    </location>
</feature>
<feature type="active site" evidence="2">
    <location>
        <position position="172"/>
    </location>
</feature>
<feature type="active site" evidence="2">
    <location>
        <position position="600"/>
    </location>
</feature>
<feature type="modified residue" description="Phosphoserine" evidence="3">
    <location>
        <position position="11"/>
    </location>
</feature>
<reference key="1">
    <citation type="journal article" date="1991" name="Plant Mol. Biol.">
        <title>Sequence analysis of cDNA encoding phosphoenolpyruvate carboxylase from cultured tobacco cells.</title>
        <authorList>
            <person name="Koizumi N."/>
            <person name="Sato F."/>
            <person name="Terano Y."/>
            <person name="Yamada Y."/>
        </authorList>
    </citation>
    <scope>NUCLEOTIDE SEQUENCE [MRNA]</scope>
    <source>
        <strain>cv. Samsun NN</strain>
    </source>
</reference>
<reference key="2">
    <citation type="journal article" date="2002" name="Nature">
        <title>Characteristics of C4 photosynthesis in stems and petioles of C3 flowering plants.</title>
        <authorList>
            <person name="Hibberd J.M."/>
            <person name="Quick W.P."/>
        </authorList>
    </citation>
    <scope>MISCELLANEOUS</scope>
</reference>
<dbReference type="EC" id="4.1.1.31"/>
<dbReference type="EMBL" id="X59016">
    <property type="protein sequence ID" value="CAA41758.1"/>
    <property type="molecule type" value="mRNA"/>
</dbReference>
<dbReference type="PIR" id="S17440">
    <property type="entry name" value="QYNT"/>
</dbReference>
<dbReference type="RefSeq" id="NP_001312166.1">
    <property type="nucleotide sequence ID" value="NM_001325237.1"/>
</dbReference>
<dbReference type="SMR" id="P27154"/>
<dbReference type="STRING" id="4097.P27154"/>
<dbReference type="PaxDb" id="4097-P27154"/>
<dbReference type="ProMEX" id="P27154"/>
<dbReference type="GeneID" id="107777405"/>
<dbReference type="KEGG" id="nta:107777405"/>
<dbReference type="OrthoDB" id="1365747at2759"/>
<dbReference type="BRENDA" id="4.1.1.31">
    <property type="organism ID" value="3645"/>
</dbReference>
<dbReference type="UniPathway" id="UPA00322"/>
<dbReference type="Proteomes" id="UP000084051">
    <property type="component" value="Unplaced"/>
</dbReference>
<dbReference type="GO" id="GO:0005829">
    <property type="term" value="C:cytosol"/>
    <property type="evidence" value="ECO:0000318"/>
    <property type="project" value="GO_Central"/>
</dbReference>
<dbReference type="GO" id="GO:0008964">
    <property type="term" value="F:phosphoenolpyruvate carboxylase activity"/>
    <property type="evidence" value="ECO:0000318"/>
    <property type="project" value="GO_Central"/>
</dbReference>
<dbReference type="GO" id="GO:0015977">
    <property type="term" value="P:carbon fixation"/>
    <property type="evidence" value="ECO:0007669"/>
    <property type="project" value="UniProtKB-KW"/>
</dbReference>
<dbReference type="GO" id="GO:0048366">
    <property type="term" value="P:leaf development"/>
    <property type="evidence" value="ECO:0000318"/>
    <property type="project" value="GO_Central"/>
</dbReference>
<dbReference type="GO" id="GO:0015979">
    <property type="term" value="P:photosynthesis"/>
    <property type="evidence" value="ECO:0007669"/>
    <property type="project" value="UniProtKB-KW"/>
</dbReference>
<dbReference type="GO" id="GO:0006099">
    <property type="term" value="P:tricarboxylic acid cycle"/>
    <property type="evidence" value="ECO:0007669"/>
    <property type="project" value="InterPro"/>
</dbReference>
<dbReference type="FunFam" id="1.20.1440.90:FF:000001">
    <property type="entry name" value="Phosphoenolpyruvate carboxylase 1"/>
    <property type="match status" value="1"/>
</dbReference>
<dbReference type="Gene3D" id="1.20.1440.90">
    <property type="entry name" value="Phosphoenolpyruvate/pyruvate domain"/>
    <property type="match status" value="1"/>
</dbReference>
<dbReference type="HAMAP" id="MF_00595">
    <property type="entry name" value="PEPcase_type1"/>
    <property type="match status" value="1"/>
</dbReference>
<dbReference type="InterPro" id="IPR021135">
    <property type="entry name" value="PEP_COase"/>
</dbReference>
<dbReference type="InterPro" id="IPR022805">
    <property type="entry name" value="PEP_COase_bac/pln-type"/>
</dbReference>
<dbReference type="InterPro" id="IPR018129">
    <property type="entry name" value="PEP_COase_Lys_AS"/>
</dbReference>
<dbReference type="InterPro" id="IPR033129">
    <property type="entry name" value="PEPCASE_His_AS"/>
</dbReference>
<dbReference type="InterPro" id="IPR015813">
    <property type="entry name" value="Pyrv/PenolPyrv_kinase-like_dom"/>
</dbReference>
<dbReference type="NCBIfam" id="NF000584">
    <property type="entry name" value="PRK00009.1"/>
    <property type="match status" value="1"/>
</dbReference>
<dbReference type="PANTHER" id="PTHR30523">
    <property type="entry name" value="PHOSPHOENOLPYRUVATE CARBOXYLASE"/>
    <property type="match status" value="1"/>
</dbReference>
<dbReference type="PANTHER" id="PTHR30523:SF35">
    <property type="entry name" value="PHOSPHOENOLPYRUVATE CARBOXYLASE"/>
    <property type="match status" value="1"/>
</dbReference>
<dbReference type="Pfam" id="PF00311">
    <property type="entry name" value="PEPcase"/>
    <property type="match status" value="1"/>
</dbReference>
<dbReference type="PRINTS" id="PR00150">
    <property type="entry name" value="PEPCARBXLASE"/>
</dbReference>
<dbReference type="SUPFAM" id="SSF51621">
    <property type="entry name" value="Phosphoenolpyruvate/pyruvate domain"/>
    <property type="match status" value="1"/>
</dbReference>
<dbReference type="PROSITE" id="PS00781">
    <property type="entry name" value="PEPCASE_1"/>
    <property type="match status" value="1"/>
</dbReference>
<dbReference type="PROSITE" id="PS00393">
    <property type="entry name" value="PEPCASE_2"/>
    <property type="match status" value="1"/>
</dbReference>
<organism>
    <name type="scientific">Nicotiana tabacum</name>
    <name type="common">Common tobacco</name>
    <dbReference type="NCBI Taxonomy" id="4097"/>
    <lineage>
        <taxon>Eukaryota</taxon>
        <taxon>Viridiplantae</taxon>
        <taxon>Streptophyta</taxon>
        <taxon>Embryophyta</taxon>
        <taxon>Tracheophyta</taxon>
        <taxon>Spermatophyta</taxon>
        <taxon>Magnoliopsida</taxon>
        <taxon>eudicotyledons</taxon>
        <taxon>Gunneridae</taxon>
        <taxon>Pentapetalae</taxon>
        <taxon>asterids</taxon>
        <taxon>lamiids</taxon>
        <taxon>Solanales</taxon>
        <taxon>Solanaceae</taxon>
        <taxon>Nicotianoideae</taxon>
        <taxon>Nicotianeae</taxon>
        <taxon>Nicotiana</taxon>
    </lineage>
</organism>
<sequence length="964" mass="110164">MATRSLEKLASIDAQLRALVPGKVSEDDKLVEYDALLLDRFLDILQDLHGEDLKETVQECYELSAEYEGKHDPKKLEELGNVLTSLDPGDSIVIAKAFSHMLNLANLAEEVQIAYRRRQKLKRGDFADENNATTESDIEETFKKLVGDLKKSPQEVFDALKNQTVDLVLTAHPTQSVRRSLLQKHGRIRDCLAQLYAKDITPDDKQELDEALQREIQAAFRTDEIRRTAPTPQDEMRAGMSYFHETIWKGVPKFLRRVDTALKNIGINERLPYNAPLIQFSSWMGGDRDGNPRVTLEVTRDVCLLARMMAANLYYSQIEELMFELSMWRCNDDLRIRAAELYRSSRRDTKHYIEFWKTIPPSEPYRVILGDVRDKLYQTRERTRQMLAHGISDIPEDATYNNVEQFLEPLELCYRSLCECGDRPIADGSLLDFLRQVSTFGLSFVRLDIRQESDRHTDVLDAITQHLEIGSYREWSEERRQEWLLSELSGKRPLFGPDLPRTEEIADVLDTLHVIAELPSDCFGAYIISMATAPSDVLAVELLQRECHVKQPLRVVPLFEKLDDLESASAAVARLFSIEWYRNRINGKQEVMVGYSDSGKDAGRFSAAWQLYKAQEELIKVAKEHGVKLTMFHGRGGTVGRGGGPTHLAILSQPPDTIQGSLRVTVQGEVIEQSFGEEHLCFRTLQRFTAATLEHGMHPPVSPKPEWRALMDEIAVIATEKYRSIVFKEPRFVEYSALATPELEYGRMNIGSRPSKRKPSGGIESLRAIPWIFAWTQTRFHLPVWLGFGAAFKYAIDKDIKNLRMFHEMYNEWPFFRVTIDLVEMVFAKGNPGIAALYDKLLVSEDLLPFGELLRSNYEETRSLLLQIAGHKDLLEGDPYLKQRLRLRDSYITTLNLLQAYTLKRIRDPNYHVTLRPHISKDYMESKSAAELVQLNPTSEYAPGLEDTLILTMKGIAAGLQNTG</sequence>
<proteinExistence type="evidence at transcript level"/>